<evidence type="ECO:0000255" key="1">
    <source>
        <dbReference type="HAMAP-Rule" id="MF_01309"/>
    </source>
</evidence>
<evidence type="ECO:0000305" key="2"/>
<reference key="1">
    <citation type="journal article" date="2000" name="Nature">
        <title>Complete genome sequence of Pseudomonas aeruginosa PAO1, an opportunistic pathogen.</title>
        <authorList>
            <person name="Stover C.K."/>
            <person name="Pham X.-Q.T."/>
            <person name="Erwin A.L."/>
            <person name="Mizoguchi S.D."/>
            <person name="Warrener P."/>
            <person name="Hickey M.J."/>
            <person name="Brinkman F.S.L."/>
            <person name="Hufnagle W.O."/>
            <person name="Kowalik D.J."/>
            <person name="Lagrou M."/>
            <person name="Garber R.L."/>
            <person name="Goltry L."/>
            <person name="Tolentino E."/>
            <person name="Westbrock-Wadman S."/>
            <person name="Yuan Y."/>
            <person name="Brody L.L."/>
            <person name="Coulter S.N."/>
            <person name="Folger K.R."/>
            <person name="Kas A."/>
            <person name="Larbig K."/>
            <person name="Lim R.M."/>
            <person name="Smith K.A."/>
            <person name="Spencer D.H."/>
            <person name="Wong G.K.-S."/>
            <person name="Wu Z."/>
            <person name="Paulsen I.T."/>
            <person name="Reizer J."/>
            <person name="Saier M.H. Jr."/>
            <person name="Hancock R.E.W."/>
            <person name="Lory S."/>
            <person name="Olson M.V."/>
        </authorList>
    </citation>
    <scope>NUCLEOTIDE SEQUENCE [LARGE SCALE GENOMIC DNA]</scope>
    <source>
        <strain>ATCC 15692 / DSM 22644 / CIP 104116 / JCM 14847 / LMG 12228 / 1C / PRS 101 / PAO1</strain>
    </source>
</reference>
<gene>
    <name evidence="1" type="primary">rpsC</name>
    <name type="ordered locus">PA4257</name>
</gene>
<accession>Q9HWE1</accession>
<organism>
    <name type="scientific">Pseudomonas aeruginosa (strain ATCC 15692 / DSM 22644 / CIP 104116 / JCM 14847 / LMG 12228 / 1C / PRS 101 / PAO1)</name>
    <dbReference type="NCBI Taxonomy" id="208964"/>
    <lineage>
        <taxon>Bacteria</taxon>
        <taxon>Pseudomonadati</taxon>
        <taxon>Pseudomonadota</taxon>
        <taxon>Gammaproteobacteria</taxon>
        <taxon>Pseudomonadales</taxon>
        <taxon>Pseudomonadaceae</taxon>
        <taxon>Pseudomonas</taxon>
    </lineage>
</organism>
<protein>
    <recommendedName>
        <fullName evidence="1">Small ribosomal subunit protein uS3</fullName>
    </recommendedName>
    <alternativeName>
        <fullName evidence="2">30S ribosomal protein S3</fullName>
    </alternativeName>
</protein>
<feature type="chain" id="PRO_0000130178" description="Small ribosomal subunit protein uS3">
    <location>
        <begin position="1"/>
        <end position="228"/>
    </location>
</feature>
<feature type="domain" description="KH type-2" evidence="1">
    <location>
        <begin position="39"/>
        <end position="107"/>
    </location>
</feature>
<dbReference type="EMBL" id="AE004091">
    <property type="protein sequence ID" value="AAG07645.1"/>
    <property type="molecule type" value="Genomic_DNA"/>
</dbReference>
<dbReference type="PIR" id="G83115">
    <property type="entry name" value="G83115"/>
</dbReference>
<dbReference type="RefSeq" id="NP_252947.1">
    <property type="nucleotide sequence ID" value="NC_002516.2"/>
</dbReference>
<dbReference type="RefSeq" id="WP_003093727.1">
    <property type="nucleotide sequence ID" value="NZ_QZGE01000028.1"/>
</dbReference>
<dbReference type="PDB" id="7UNR">
    <property type="method" value="EM"/>
    <property type="resolution" value="2.90 A"/>
    <property type="chains" value="c=1-228"/>
</dbReference>
<dbReference type="PDB" id="7UNU">
    <property type="method" value="EM"/>
    <property type="resolution" value="2.90 A"/>
    <property type="chains" value="c=1-228"/>
</dbReference>
<dbReference type="PDB" id="7UNV">
    <property type="method" value="EM"/>
    <property type="resolution" value="2.70 A"/>
    <property type="chains" value="c=1-228"/>
</dbReference>
<dbReference type="PDB" id="7UNW">
    <property type="method" value="EM"/>
    <property type="resolution" value="2.60 A"/>
    <property type="chains" value="c=1-228"/>
</dbReference>
<dbReference type="PDB" id="8CD1">
    <property type="method" value="EM"/>
    <property type="resolution" value="3.00 A"/>
    <property type="chains" value="c=1-228"/>
</dbReference>
<dbReference type="PDB" id="8RWG">
    <property type="method" value="EM"/>
    <property type="resolution" value="2.46 A"/>
    <property type="chains" value="b=1-228"/>
</dbReference>
<dbReference type="PDBsum" id="7UNR"/>
<dbReference type="PDBsum" id="7UNU"/>
<dbReference type="PDBsum" id="7UNV"/>
<dbReference type="PDBsum" id="7UNW"/>
<dbReference type="PDBsum" id="8CD1"/>
<dbReference type="PDBsum" id="8RWG"/>
<dbReference type="EMDB" id="EMD-16566"/>
<dbReference type="EMDB" id="EMD-19547"/>
<dbReference type="EMDB" id="EMD-26630"/>
<dbReference type="EMDB" id="EMD-26633"/>
<dbReference type="EMDB" id="EMD-26634"/>
<dbReference type="EMDB" id="EMD-26635"/>
<dbReference type="SMR" id="Q9HWE1"/>
<dbReference type="FunCoup" id="Q9HWE1">
    <property type="interactions" value="1023"/>
</dbReference>
<dbReference type="STRING" id="208964.PA4257"/>
<dbReference type="PaxDb" id="208964-PA4257"/>
<dbReference type="GeneID" id="77219204"/>
<dbReference type="GeneID" id="881761"/>
<dbReference type="KEGG" id="pae:PA4257"/>
<dbReference type="PATRIC" id="fig|208964.12.peg.4458"/>
<dbReference type="PseudoCAP" id="PA4257"/>
<dbReference type="HOGENOM" id="CLU_058591_0_2_6"/>
<dbReference type="InParanoid" id="Q9HWE1"/>
<dbReference type="OrthoDB" id="9806396at2"/>
<dbReference type="PhylomeDB" id="Q9HWE1"/>
<dbReference type="BioCyc" id="PAER208964:G1FZ6-4330-MONOMER"/>
<dbReference type="PRO" id="PR:Q9HWE1"/>
<dbReference type="Proteomes" id="UP000002438">
    <property type="component" value="Chromosome"/>
</dbReference>
<dbReference type="GO" id="GO:0022627">
    <property type="term" value="C:cytosolic small ribosomal subunit"/>
    <property type="evidence" value="ECO:0000318"/>
    <property type="project" value="GO_Central"/>
</dbReference>
<dbReference type="GO" id="GO:0003729">
    <property type="term" value="F:mRNA binding"/>
    <property type="evidence" value="ECO:0007669"/>
    <property type="project" value="UniProtKB-UniRule"/>
</dbReference>
<dbReference type="GO" id="GO:0019843">
    <property type="term" value="F:rRNA binding"/>
    <property type="evidence" value="ECO:0007669"/>
    <property type="project" value="UniProtKB-UniRule"/>
</dbReference>
<dbReference type="GO" id="GO:0003735">
    <property type="term" value="F:structural constituent of ribosome"/>
    <property type="evidence" value="ECO:0000318"/>
    <property type="project" value="GO_Central"/>
</dbReference>
<dbReference type="GO" id="GO:0006412">
    <property type="term" value="P:translation"/>
    <property type="evidence" value="ECO:0007669"/>
    <property type="project" value="UniProtKB-UniRule"/>
</dbReference>
<dbReference type="CDD" id="cd02412">
    <property type="entry name" value="KH-II_30S_S3"/>
    <property type="match status" value="1"/>
</dbReference>
<dbReference type="FunFam" id="3.30.1140.32:FF:000001">
    <property type="entry name" value="30S ribosomal protein S3"/>
    <property type="match status" value="1"/>
</dbReference>
<dbReference type="FunFam" id="3.30.300.20:FF:000001">
    <property type="entry name" value="30S ribosomal protein S3"/>
    <property type="match status" value="1"/>
</dbReference>
<dbReference type="Gene3D" id="3.30.300.20">
    <property type="match status" value="1"/>
</dbReference>
<dbReference type="Gene3D" id="3.30.1140.32">
    <property type="entry name" value="Ribosomal protein S3, C-terminal domain"/>
    <property type="match status" value="1"/>
</dbReference>
<dbReference type="HAMAP" id="MF_01309_B">
    <property type="entry name" value="Ribosomal_uS3_B"/>
    <property type="match status" value="1"/>
</dbReference>
<dbReference type="InterPro" id="IPR004087">
    <property type="entry name" value="KH_dom"/>
</dbReference>
<dbReference type="InterPro" id="IPR015946">
    <property type="entry name" value="KH_dom-like_a/b"/>
</dbReference>
<dbReference type="InterPro" id="IPR004044">
    <property type="entry name" value="KH_dom_type_2"/>
</dbReference>
<dbReference type="InterPro" id="IPR009019">
    <property type="entry name" value="KH_sf_prok-type"/>
</dbReference>
<dbReference type="InterPro" id="IPR036419">
    <property type="entry name" value="Ribosomal_S3_C_sf"/>
</dbReference>
<dbReference type="InterPro" id="IPR005704">
    <property type="entry name" value="Ribosomal_uS3_bac-typ"/>
</dbReference>
<dbReference type="InterPro" id="IPR001351">
    <property type="entry name" value="Ribosomal_uS3_C"/>
</dbReference>
<dbReference type="InterPro" id="IPR018280">
    <property type="entry name" value="Ribosomal_uS3_CS"/>
</dbReference>
<dbReference type="NCBIfam" id="TIGR01009">
    <property type="entry name" value="rpsC_bact"/>
    <property type="match status" value="1"/>
</dbReference>
<dbReference type="PANTHER" id="PTHR11760">
    <property type="entry name" value="30S/40S RIBOSOMAL PROTEIN S3"/>
    <property type="match status" value="1"/>
</dbReference>
<dbReference type="PANTHER" id="PTHR11760:SF19">
    <property type="entry name" value="SMALL RIBOSOMAL SUBUNIT PROTEIN US3C"/>
    <property type="match status" value="1"/>
</dbReference>
<dbReference type="Pfam" id="PF07650">
    <property type="entry name" value="KH_2"/>
    <property type="match status" value="1"/>
</dbReference>
<dbReference type="Pfam" id="PF00189">
    <property type="entry name" value="Ribosomal_S3_C"/>
    <property type="match status" value="1"/>
</dbReference>
<dbReference type="SMART" id="SM00322">
    <property type="entry name" value="KH"/>
    <property type="match status" value="1"/>
</dbReference>
<dbReference type="SUPFAM" id="SSF54814">
    <property type="entry name" value="Prokaryotic type KH domain (KH-domain type II)"/>
    <property type="match status" value="1"/>
</dbReference>
<dbReference type="SUPFAM" id="SSF54821">
    <property type="entry name" value="Ribosomal protein S3 C-terminal domain"/>
    <property type="match status" value="1"/>
</dbReference>
<dbReference type="PROSITE" id="PS50823">
    <property type="entry name" value="KH_TYPE_2"/>
    <property type="match status" value="1"/>
</dbReference>
<dbReference type="PROSITE" id="PS00548">
    <property type="entry name" value="RIBOSOMAL_S3"/>
    <property type="match status" value="1"/>
</dbReference>
<name>RS3_PSEAE</name>
<sequence length="228" mass="25838">MGQKVHPNGIRLGIVKEHTSVWYADRKNYADYLFADLKVREYLQDKLKSASVSRIDIHRPAQTARITIHTARPGIVIGKKGEDVEKLRQDLTKQMGVPVHINIEEIRKPELDAMLVAQSVAQQLERRVMFRRAMKRAVQNAMRIGAKGIKIQVSGRLGGAEIARTEWYREGRVPLHTLRADIDYATYEAHTTYGVIGVKVWIFKGEVIGGRQEELKPVAPAPRKKAAR</sequence>
<comment type="function">
    <text evidence="1">Binds the lower part of the 30S subunit head. Binds mRNA in the 70S ribosome, positioning it for translation.</text>
</comment>
<comment type="subunit">
    <text evidence="1">Part of the 30S ribosomal subunit. Forms a tight complex with proteins S10 and S14.</text>
</comment>
<comment type="similarity">
    <text evidence="1">Belongs to the universal ribosomal protein uS3 family.</text>
</comment>
<keyword id="KW-0002">3D-structure</keyword>
<keyword id="KW-1185">Reference proteome</keyword>
<keyword id="KW-0687">Ribonucleoprotein</keyword>
<keyword id="KW-0689">Ribosomal protein</keyword>
<keyword id="KW-0694">RNA-binding</keyword>
<keyword id="KW-0699">rRNA-binding</keyword>
<proteinExistence type="evidence at protein level"/>